<organism>
    <name type="scientific">Ferrimonas balearica (strain DSM 9799 / CCM 4581 / KCTC 23876 / PAT)</name>
    <dbReference type="NCBI Taxonomy" id="550540"/>
    <lineage>
        <taxon>Bacteria</taxon>
        <taxon>Pseudomonadati</taxon>
        <taxon>Pseudomonadota</taxon>
        <taxon>Gammaproteobacteria</taxon>
        <taxon>Alteromonadales</taxon>
        <taxon>Ferrimonadaceae</taxon>
        <taxon>Ferrimonas</taxon>
    </lineage>
</organism>
<name>ZAPC_FERBD</name>
<dbReference type="EMBL" id="CP002209">
    <property type="protein sequence ID" value="ADN76088.1"/>
    <property type="molecule type" value="Genomic_DNA"/>
</dbReference>
<dbReference type="RefSeq" id="WP_013345394.1">
    <property type="nucleotide sequence ID" value="NC_014541.1"/>
</dbReference>
<dbReference type="SMR" id="E1ST41"/>
<dbReference type="STRING" id="550540.Fbal_1885"/>
<dbReference type="GeneID" id="67182090"/>
<dbReference type="KEGG" id="fbl:Fbal_1885"/>
<dbReference type="eggNOG" id="ENOG502Z8AH">
    <property type="taxonomic scope" value="Bacteria"/>
</dbReference>
<dbReference type="HOGENOM" id="CLU_128248_0_0_6"/>
<dbReference type="OrthoDB" id="5765005at2"/>
<dbReference type="Proteomes" id="UP000006683">
    <property type="component" value="Chromosome"/>
</dbReference>
<dbReference type="GO" id="GO:0005737">
    <property type="term" value="C:cytoplasm"/>
    <property type="evidence" value="ECO:0007669"/>
    <property type="project" value="UniProtKB-SubCell"/>
</dbReference>
<dbReference type="GO" id="GO:0000917">
    <property type="term" value="P:division septum assembly"/>
    <property type="evidence" value="ECO:0007669"/>
    <property type="project" value="UniProtKB-KW"/>
</dbReference>
<dbReference type="GO" id="GO:0043093">
    <property type="term" value="P:FtsZ-dependent cytokinesis"/>
    <property type="evidence" value="ECO:0007669"/>
    <property type="project" value="UniProtKB-UniRule"/>
</dbReference>
<dbReference type="HAMAP" id="MF_00906">
    <property type="entry name" value="ZapC"/>
    <property type="match status" value="1"/>
</dbReference>
<dbReference type="InterPro" id="IPR009809">
    <property type="entry name" value="ZapC"/>
</dbReference>
<dbReference type="InterPro" id="IPR048372">
    <property type="entry name" value="ZapC_C"/>
</dbReference>
<dbReference type="InterPro" id="IPR048373">
    <property type="entry name" value="ZapC_N"/>
</dbReference>
<dbReference type="Pfam" id="PF07126">
    <property type="entry name" value="ZapC_C"/>
    <property type="match status" value="1"/>
</dbReference>
<dbReference type="Pfam" id="PF21083">
    <property type="entry name" value="ZapC_N"/>
    <property type="match status" value="1"/>
</dbReference>
<dbReference type="PIRSF" id="PIRSF010252">
    <property type="entry name" value="ZapC"/>
    <property type="match status" value="1"/>
</dbReference>
<keyword id="KW-0131">Cell cycle</keyword>
<keyword id="KW-0132">Cell division</keyword>
<keyword id="KW-0963">Cytoplasm</keyword>
<keyword id="KW-1185">Reference proteome</keyword>
<keyword id="KW-0717">Septation</keyword>
<sequence>MYITPEPCWAWMYHHDEDKLALELGEDWLFLSPFSARHLIPDSLHGAAFSAQHADYYNDVLDRLRKQLPNSAPEVVQIALNLTAAHFFSLPMMPKSWFFQTSAHIAYACNGKLVELDTGSERARFAVVDGGEQSSLLMLLEQSLALGNKKTMKQFELIKVMNDRLSPCQSLKHRRIVAA</sequence>
<proteinExistence type="inferred from homology"/>
<evidence type="ECO:0000255" key="1">
    <source>
        <dbReference type="HAMAP-Rule" id="MF_00906"/>
    </source>
</evidence>
<comment type="function">
    <text evidence="1">Contributes to the efficiency of the cell division process by stabilizing the polymeric form of the cell division protein FtsZ. Acts by promoting interactions between FtsZ protofilaments and suppressing the GTPase activity of FtsZ.</text>
</comment>
<comment type="subunit">
    <text evidence="1">Interacts directly with FtsZ.</text>
</comment>
<comment type="subcellular location">
    <subcellularLocation>
        <location evidence="1">Cytoplasm</location>
    </subcellularLocation>
</comment>
<comment type="similarity">
    <text evidence="1">Belongs to the ZapC family.</text>
</comment>
<gene>
    <name evidence="1" type="primary">zapC</name>
    <name type="ordered locus">Fbal_1885</name>
</gene>
<accession>E1ST41</accession>
<protein>
    <recommendedName>
        <fullName evidence="1">Cell division protein ZapC</fullName>
    </recommendedName>
</protein>
<feature type="chain" id="PRO_0000413778" description="Cell division protein ZapC">
    <location>
        <begin position="1"/>
        <end position="179"/>
    </location>
</feature>
<reference key="1">
    <citation type="journal article" date="2010" name="Stand. Genomic Sci.">
        <title>Complete genome sequence of Ferrimonas balearica type strain (PAT).</title>
        <authorList>
            <person name="Nolan M."/>
            <person name="Sikorski J."/>
            <person name="Davenport K."/>
            <person name="Lucas S."/>
            <person name="Del Rio T.G."/>
            <person name="Tice H."/>
            <person name="Cheng J.F."/>
            <person name="Goodwin L."/>
            <person name="Pitluck S."/>
            <person name="Liolios K."/>
            <person name="Ivanova N."/>
            <person name="Mavromatis K."/>
            <person name="Ovchinnikova G."/>
            <person name="Pati A."/>
            <person name="Chen A."/>
            <person name="Palaniappan K."/>
            <person name="Land M."/>
            <person name="Hauser L."/>
            <person name="Chang Y.J."/>
            <person name="Jeffries C.D."/>
            <person name="Tapia R."/>
            <person name="Brettin T."/>
            <person name="Detter J.C."/>
            <person name="Han C."/>
            <person name="Yasawong M."/>
            <person name="Rohde M."/>
            <person name="Tindall B.J."/>
            <person name="Goker M."/>
            <person name="Woyke T."/>
            <person name="Bristow J."/>
            <person name="Eisen J.A."/>
            <person name="Markowitz V."/>
            <person name="Hugenholtz P."/>
            <person name="Kyrpides N.C."/>
            <person name="Klenk H.P."/>
            <person name="Lapidus A."/>
        </authorList>
    </citation>
    <scope>NUCLEOTIDE SEQUENCE [LARGE SCALE GENOMIC DNA]</scope>
    <source>
        <strain>DSM 9799 / CCM 4581 / KCTC 23876 / PAT</strain>
    </source>
</reference>